<proteinExistence type="inferred from homology"/>
<dbReference type="EC" id="2.1.1.192" evidence="1"/>
<dbReference type="EMBL" id="AM933172">
    <property type="protein sequence ID" value="CAR34088.1"/>
    <property type="molecule type" value="Genomic_DNA"/>
</dbReference>
<dbReference type="RefSeq" id="WP_000003206.1">
    <property type="nucleotide sequence ID" value="NC_011294.1"/>
</dbReference>
<dbReference type="SMR" id="B5R584"/>
<dbReference type="KEGG" id="set:SEN2505"/>
<dbReference type="HOGENOM" id="CLU_029101_0_0_6"/>
<dbReference type="Proteomes" id="UP000000613">
    <property type="component" value="Chromosome"/>
</dbReference>
<dbReference type="GO" id="GO:0005737">
    <property type="term" value="C:cytoplasm"/>
    <property type="evidence" value="ECO:0007669"/>
    <property type="project" value="UniProtKB-SubCell"/>
</dbReference>
<dbReference type="GO" id="GO:0051539">
    <property type="term" value="F:4 iron, 4 sulfur cluster binding"/>
    <property type="evidence" value="ECO:0007669"/>
    <property type="project" value="UniProtKB-UniRule"/>
</dbReference>
<dbReference type="GO" id="GO:0046872">
    <property type="term" value="F:metal ion binding"/>
    <property type="evidence" value="ECO:0007669"/>
    <property type="project" value="UniProtKB-KW"/>
</dbReference>
<dbReference type="GO" id="GO:0070040">
    <property type="term" value="F:rRNA (adenine(2503)-C2-)-methyltransferase activity"/>
    <property type="evidence" value="ECO:0007669"/>
    <property type="project" value="UniProtKB-UniRule"/>
</dbReference>
<dbReference type="GO" id="GO:0019843">
    <property type="term" value="F:rRNA binding"/>
    <property type="evidence" value="ECO:0007669"/>
    <property type="project" value="UniProtKB-UniRule"/>
</dbReference>
<dbReference type="GO" id="GO:0002935">
    <property type="term" value="F:tRNA (adenine(37)-C2)-methyltransferase activity"/>
    <property type="evidence" value="ECO:0007669"/>
    <property type="project" value="UniProtKB-UniRule"/>
</dbReference>
<dbReference type="GO" id="GO:0000049">
    <property type="term" value="F:tRNA binding"/>
    <property type="evidence" value="ECO:0007669"/>
    <property type="project" value="UniProtKB-UniRule"/>
</dbReference>
<dbReference type="GO" id="GO:0070475">
    <property type="term" value="P:rRNA base methylation"/>
    <property type="evidence" value="ECO:0007669"/>
    <property type="project" value="UniProtKB-UniRule"/>
</dbReference>
<dbReference type="GO" id="GO:0030488">
    <property type="term" value="P:tRNA methylation"/>
    <property type="evidence" value="ECO:0007669"/>
    <property type="project" value="UniProtKB-UniRule"/>
</dbReference>
<dbReference type="CDD" id="cd01335">
    <property type="entry name" value="Radical_SAM"/>
    <property type="match status" value="1"/>
</dbReference>
<dbReference type="FunFam" id="1.10.150.530:FF:000001">
    <property type="entry name" value="Dual-specificity RNA methyltransferase RlmN"/>
    <property type="match status" value="1"/>
</dbReference>
<dbReference type="FunFam" id="3.20.20.70:FF:000008">
    <property type="entry name" value="Dual-specificity RNA methyltransferase RlmN"/>
    <property type="match status" value="1"/>
</dbReference>
<dbReference type="Gene3D" id="1.10.150.530">
    <property type="match status" value="1"/>
</dbReference>
<dbReference type="Gene3D" id="3.20.20.70">
    <property type="entry name" value="Aldolase class I"/>
    <property type="match status" value="1"/>
</dbReference>
<dbReference type="HAMAP" id="MF_01849">
    <property type="entry name" value="RNA_methyltr_RlmN"/>
    <property type="match status" value="1"/>
</dbReference>
<dbReference type="InterPro" id="IPR013785">
    <property type="entry name" value="Aldolase_TIM"/>
</dbReference>
<dbReference type="InterPro" id="IPR040072">
    <property type="entry name" value="Methyltransferase_A"/>
</dbReference>
<dbReference type="InterPro" id="IPR048641">
    <property type="entry name" value="RlmN_N"/>
</dbReference>
<dbReference type="InterPro" id="IPR027492">
    <property type="entry name" value="RNA_MTrfase_RlmN"/>
</dbReference>
<dbReference type="InterPro" id="IPR004383">
    <property type="entry name" value="rRNA_lsu_MTrfase_RlmN/Cfr"/>
</dbReference>
<dbReference type="InterPro" id="IPR007197">
    <property type="entry name" value="rSAM"/>
</dbReference>
<dbReference type="NCBIfam" id="NF008396">
    <property type="entry name" value="PRK11194.1"/>
    <property type="match status" value="1"/>
</dbReference>
<dbReference type="NCBIfam" id="TIGR00048">
    <property type="entry name" value="rRNA_mod_RlmN"/>
    <property type="match status" value="1"/>
</dbReference>
<dbReference type="PANTHER" id="PTHR30544">
    <property type="entry name" value="23S RRNA METHYLTRANSFERASE"/>
    <property type="match status" value="1"/>
</dbReference>
<dbReference type="PANTHER" id="PTHR30544:SF5">
    <property type="entry name" value="RADICAL SAM CORE DOMAIN-CONTAINING PROTEIN"/>
    <property type="match status" value="1"/>
</dbReference>
<dbReference type="Pfam" id="PF04055">
    <property type="entry name" value="Radical_SAM"/>
    <property type="match status" value="1"/>
</dbReference>
<dbReference type="Pfam" id="PF21016">
    <property type="entry name" value="RlmN_N"/>
    <property type="match status" value="1"/>
</dbReference>
<dbReference type="PIRSF" id="PIRSF006004">
    <property type="entry name" value="CHP00048"/>
    <property type="match status" value="1"/>
</dbReference>
<dbReference type="SFLD" id="SFLDF00275">
    <property type="entry name" value="adenosine_C2_methyltransferase"/>
    <property type="match status" value="1"/>
</dbReference>
<dbReference type="SFLD" id="SFLDS00029">
    <property type="entry name" value="Radical_SAM"/>
    <property type="match status" value="1"/>
</dbReference>
<dbReference type="SUPFAM" id="SSF102114">
    <property type="entry name" value="Radical SAM enzymes"/>
    <property type="match status" value="1"/>
</dbReference>
<dbReference type="PROSITE" id="PS51918">
    <property type="entry name" value="RADICAL_SAM"/>
    <property type="match status" value="1"/>
</dbReference>
<feature type="chain" id="PRO_1000188599" description="Dual-specificity RNA methyltransferase RlmN">
    <location>
        <begin position="1"/>
        <end position="388"/>
    </location>
</feature>
<feature type="domain" description="Radical SAM core" evidence="2">
    <location>
        <begin position="115"/>
        <end position="354"/>
    </location>
</feature>
<feature type="active site" description="Proton acceptor" evidence="1">
    <location>
        <position position="109"/>
    </location>
</feature>
<feature type="active site" description="S-methylcysteine intermediate" evidence="1">
    <location>
        <position position="359"/>
    </location>
</feature>
<feature type="binding site" evidence="1">
    <location>
        <position position="129"/>
    </location>
    <ligand>
        <name>[4Fe-4S] cluster</name>
        <dbReference type="ChEBI" id="CHEBI:49883"/>
        <note>4Fe-4S-S-AdoMet</note>
    </ligand>
</feature>
<feature type="binding site" evidence="1">
    <location>
        <position position="133"/>
    </location>
    <ligand>
        <name>[4Fe-4S] cluster</name>
        <dbReference type="ChEBI" id="CHEBI:49883"/>
        <note>4Fe-4S-S-AdoMet</note>
    </ligand>
</feature>
<feature type="binding site" evidence="1">
    <location>
        <position position="136"/>
    </location>
    <ligand>
        <name>[4Fe-4S] cluster</name>
        <dbReference type="ChEBI" id="CHEBI:49883"/>
        <note>4Fe-4S-S-AdoMet</note>
    </ligand>
</feature>
<feature type="binding site" evidence="1">
    <location>
        <begin position="183"/>
        <end position="184"/>
    </location>
    <ligand>
        <name>S-adenosyl-L-methionine</name>
        <dbReference type="ChEBI" id="CHEBI:59789"/>
    </ligand>
</feature>
<feature type="binding site" evidence="1">
    <location>
        <position position="215"/>
    </location>
    <ligand>
        <name>S-adenosyl-L-methionine</name>
        <dbReference type="ChEBI" id="CHEBI:59789"/>
    </ligand>
</feature>
<feature type="binding site" evidence="1">
    <location>
        <begin position="237"/>
        <end position="239"/>
    </location>
    <ligand>
        <name>S-adenosyl-L-methionine</name>
        <dbReference type="ChEBI" id="CHEBI:59789"/>
    </ligand>
</feature>
<feature type="binding site" evidence="1">
    <location>
        <position position="316"/>
    </location>
    <ligand>
        <name>S-adenosyl-L-methionine</name>
        <dbReference type="ChEBI" id="CHEBI:59789"/>
    </ligand>
</feature>
<feature type="disulfide bond" description="(transient)" evidence="1">
    <location>
        <begin position="122"/>
        <end position="359"/>
    </location>
</feature>
<organism>
    <name type="scientific">Salmonella enteritidis PT4 (strain P125109)</name>
    <dbReference type="NCBI Taxonomy" id="550537"/>
    <lineage>
        <taxon>Bacteria</taxon>
        <taxon>Pseudomonadati</taxon>
        <taxon>Pseudomonadota</taxon>
        <taxon>Gammaproteobacteria</taxon>
        <taxon>Enterobacterales</taxon>
        <taxon>Enterobacteriaceae</taxon>
        <taxon>Salmonella</taxon>
    </lineage>
</organism>
<reference key="1">
    <citation type="journal article" date="2008" name="Genome Res.">
        <title>Comparative genome analysis of Salmonella enteritidis PT4 and Salmonella gallinarum 287/91 provides insights into evolutionary and host adaptation pathways.</title>
        <authorList>
            <person name="Thomson N.R."/>
            <person name="Clayton D.J."/>
            <person name="Windhorst D."/>
            <person name="Vernikos G."/>
            <person name="Davidson S."/>
            <person name="Churcher C."/>
            <person name="Quail M.A."/>
            <person name="Stevens M."/>
            <person name="Jones M.A."/>
            <person name="Watson M."/>
            <person name="Barron A."/>
            <person name="Layton A."/>
            <person name="Pickard D."/>
            <person name="Kingsley R.A."/>
            <person name="Bignell A."/>
            <person name="Clark L."/>
            <person name="Harris B."/>
            <person name="Ormond D."/>
            <person name="Abdellah Z."/>
            <person name="Brooks K."/>
            <person name="Cherevach I."/>
            <person name="Chillingworth T."/>
            <person name="Woodward J."/>
            <person name="Norberczak H."/>
            <person name="Lord A."/>
            <person name="Arrowsmith C."/>
            <person name="Jagels K."/>
            <person name="Moule S."/>
            <person name="Mungall K."/>
            <person name="Saunders M."/>
            <person name="Whitehead S."/>
            <person name="Chabalgoity J.A."/>
            <person name="Maskell D."/>
            <person name="Humphreys T."/>
            <person name="Roberts M."/>
            <person name="Barrow P.A."/>
            <person name="Dougan G."/>
            <person name="Parkhill J."/>
        </authorList>
    </citation>
    <scope>NUCLEOTIDE SEQUENCE [LARGE SCALE GENOMIC DNA]</scope>
    <source>
        <strain>P125109</strain>
    </source>
</reference>
<comment type="function">
    <text evidence="1">Specifically methylates position 2 of adenine 2503 in 23S rRNA and position 2 of adenine 37 in tRNAs. m2A2503 modification seems to play a crucial role in the proofreading step occurring at the peptidyl transferase center and thus would serve to optimize ribosomal fidelity.</text>
</comment>
<comment type="catalytic activity">
    <reaction evidence="1">
        <text>adenosine(2503) in 23S rRNA + 2 reduced [2Fe-2S]-[ferredoxin] + 2 S-adenosyl-L-methionine = 2-methyladenosine(2503) in 23S rRNA + 5'-deoxyadenosine + L-methionine + 2 oxidized [2Fe-2S]-[ferredoxin] + S-adenosyl-L-homocysteine</text>
        <dbReference type="Rhea" id="RHEA:42916"/>
        <dbReference type="Rhea" id="RHEA-COMP:10000"/>
        <dbReference type="Rhea" id="RHEA-COMP:10001"/>
        <dbReference type="Rhea" id="RHEA-COMP:10152"/>
        <dbReference type="Rhea" id="RHEA-COMP:10282"/>
        <dbReference type="ChEBI" id="CHEBI:17319"/>
        <dbReference type="ChEBI" id="CHEBI:33737"/>
        <dbReference type="ChEBI" id="CHEBI:33738"/>
        <dbReference type="ChEBI" id="CHEBI:57844"/>
        <dbReference type="ChEBI" id="CHEBI:57856"/>
        <dbReference type="ChEBI" id="CHEBI:59789"/>
        <dbReference type="ChEBI" id="CHEBI:74411"/>
        <dbReference type="ChEBI" id="CHEBI:74497"/>
        <dbReference type="EC" id="2.1.1.192"/>
    </reaction>
</comment>
<comment type="catalytic activity">
    <reaction evidence="1">
        <text>adenosine(37) in tRNA + 2 reduced [2Fe-2S]-[ferredoxin] + 2 S-adenosyl-L-methionine = 2-methyladenosine(37) in tRNA + 5'-deoxyadenosine + L-methionine + 2 oxidized [2Fe-2S]-[ferredoxin] + S-adenosyl-L-homocysteine</text>
        <dbReference type="Rhea" id="RHEA:43332"/>
        <dbReference type="Rhea" id="RHEA-COMP:10000"/>
        <dbReference type="Rhea" id="RHEA-COMP:10001"/>
        <dbReference type="Rhea" id="RHEA-COMP:10162"/>
        <dbReference type="Rhea" id="RHEA-COMP:10485"/>
        <dbReference type="ChEBI" id="CHEBI:17319"/>
        <dbReference type="ChEBI" id="CHEBI:33737"/>
        <dbReference type="ChEBI" id="CHEBI:33738"/>
        <dbReference type="ChEBI" id="CHEBI:57844"/>
        <dbReference type="ChEBI" id="CHEBI:57856"/>
        <dbReference type="ChEBI" id="CHEBI:59789"/>
        <dbReference type="ChEBI" id="CHEBI:74411"/>
        <dbReference type="ChEBI" id="CHEBI:74497"/>
        <dbReference type="EC" id="2.1.1.192"/>
    </reaction>
</comment>
<comment type="cofactor">
    <cofactor evidence="1">
        <name>[4Fe-4S] cluster</name>
        <dbReference type="ChEBI" id="CHEBI:49883"/>
    </cofactor>
    <text evidence="1">Binds 1 [4Fe-4S] cluster. The cluster is coordinated with 3 cysteines and an exchangeable S-adenosyl-L-methionine.</text>
</comment>
<comment type="subcellular location">
    <subcellularLocation>
        <location evidence="1">Cytoplasm</location>
    </subcellularLocation>
</comment>
<comment type="miscellaneous">
    <text evidence="1">Reaction proceeds by a ping-pong mechanism involving intermediate methylation of a conserved cysteine residue.</text>
</comment>
<comment type="similarity">
    <text evidence="1">Belongs to the radical SAM superfamily. RlmN family.</text>
</comment>
<keyword id="KW-0004">4Fe-4S</keyword>
<keyword id="KW-0963">Cytoplasm</keyword>
<keyword id="KW-1015">Disulfide bond</keyword>
<keyword id="KW-0408">Iron</keyword>
<keyword id="KW-0411">Iron-sulfur</keyword>
<keyword id="KW-0479">Metal-binding</keyword>
<keyword id="KW-0489">Methyltransferase</keyword>
<keyword id="KW-0698">rRNA processing</keyword>
<keyword id="KW-0949">S-adenosyl-L-methionine</keyword>
<keyword id="KW-0808">Transferase</keyword>
<keyword id="KW-0819">tRNA processing</keyword>
<gene>
    <name evidence="1" type="primary">rlmN</name>
    <name type="ordered locus">SEN2505</name>
</gene>
<protein>
    <recommendedName>
        <fullName evidence="1">Dual-specificity RNA methyltransferase RlmN</fullName>
        <ecNumber evidence="1">2.1.1.192</ecNumber>
    </recommendedName>
    <alternativeName>
        <fullName evidence="1">23S rRNA (adenine(2503)-C(2))-methyltransferase</fullName>
    </alternativeName>
    <alternativeName>
        <fullName evidence="1">23S rRNA m2A2503 methyltransferase</fullName>
    </alternativeName>
    <alternativeName>
        <fullName evidence="1">Ribosomal RNA large subunit methyltransferase N</fullName>
    </alternativeName>
    <alternativeName>
        <fullName evidence="1">tRNA (adenine(37)-C(2))-methyltransferase</fullName>
    </alternativeName>
    <alternativeName>
        <fullName evidence="1">tRNA m2A37 methyltransferase</fullName>
    </alternativeName>
</protein>
<evidence type="ECO:0000255" key="1">
    <source>
        <dbReference type="HAMAP-Rule" id="MF_01849"/>
    </source>
</evidence>
<evidence type="ECO:0000255" key="2">
    <source>
        <dbReference type="PROSITE-ProRule" id="PRU01266"/>
    </source>
</evidence>
<sequence length="388" mass="43512">MSEQIVTPESSTPVVLNNETKINLLDLNRQQMREFFKNLGEKPFRADQVMKWMYHYCCDNFDEMTDINKVLRGKLKEVAEIRAPEVVEEQRSSDGTIKWAIAVGDQRVETVYIPEDDRATLCVSSQVGCALECKFCSTAQQGFNRNLRVSEIIGQVWRAAKIVGAAKVTGQRPITNVVMMGMGEPLLNLTNVVPAMEIMLDDFGFGLSKRRVTLSTSGVVPALDKLGDMIDVALAISLHAPNDTIRDEIVPINKKYNIETFLGAVRRYLEKSNANQGRVTIEYVMLDHVNDGTEHAHQLAELLKETPCKINLIPWNPFPGAPYGRSSNSRIDRFSKVLMSYGFTTIVRKTRGDDIDAACGQLAGDVIDRTKRTLRKRMQGEVIDIKAI</sequence>
<name>RLMN_SALEP</name>
<accession>B5R584</accession>